<protein>
    <recommendedName>
        <fullName evidence="1">DNA ligase</fullName>
        <ecNumber evidence="1">6.5.1.2</ecNumber>
    </recommendedName>
    <alternativeName>
        <fullName evidence="1">Polydeoxyribonucleotide synthase [NAD(+)]</fullName>
    </alternativeName>
</protein>
<keyword id="KW-0227">DNA damage</keyword>
<keyword id="KW-0234">DNA repair</keyword>
<keyword id="KW-0235">DNA replication</keyword>
<keyword id="KW-0436">Ligase</keyword>
<keyword id="KW-0460">Magnesium</keyword>
<keyword id="KW-0464">Manganese</keyword>
<keyword id="KW-0479">Metal-binding</keyword>
<keyword id="KW-0520">NAD</keyword>
<keyword id="KW-1185">Reference proteome</keyword>
<keyword id="KW-0862">Zinc</keyword>
<gene>
    <name evidence="1" type="primary">ligA</name>
    <name type="ordered locus">OTBS_1717</name>
</gene>
<reference key="1">
    <citation type="journal article" date="2007" name="Proc. Natl. Acad. Sci. U.S.A.">
        <title>The Orientia tsutsugamushi genome reveals massive proliferation of conjugative type IV secretion system and host-cell interaction genes.</title>
        <authorList>
            <person name="Cho N.-H."/>
            <person name="Kim H.-R."/>
            <person name="Lee J.-H."/>
            <person name="Kim S.-Y."/>
            <person name="Kim J."/>
            <person name="Cha S."/>
            <person name="Kim S.-Y."/>
            <person name="Darby A.C."/>
            <person name="Fuxelius H.-H."/>
            <person name="Yin J."/>
            <person name="Kim J.H."/>
            <person name="Kim J."/>
            <person name="Lee S.J."/>
            <person name="Koh Y.-S."/>
            <person name="Jang W.-J."/>
            <person name="Park K.-H."/>
            <person name="Andersson S.G.E."/>
            <person name="Choi M.-S."/>
            <person name="Kim I.-S."/>
        </authorList>
    </citation>
    <scope>NUCLEOTIDE SEQUENCE [LARGE SCALE GENOMIC DNA]</scope>
    <source>
        <strain>Boryong</strain>
    </source>
</reference>
<organism>
    <name type="scientific">Orientia tsutsugamushi (strain Boryong)</name>
    <name type="common">Rickettsia tsutsugamushi</name>
    <dbReference type="NCBI Taxonomy" id="357244"/>
    <lineage>
        <taxon>Bacteria</taxon>
        <taxon>Pseudomonadati</taxon>
        <taxon>Pseudomonadota</taxon>
        <taxon>Alphaproteobacteria</taxon>
        <taxon>Rickettsiales</taxon>
        <taxon>Rickettsiaceae</taxon>
        <taxon>Rickettsieae</taxon>
        <taxon>Orientia</taxon>
    </lineage>
</organism>
<sequence length="698" mass="78110">MNKLDISTINIEQLTSDHAKKIVDFLALELQKYDQAYYSDNNPLVTDAQYDVLKNLNNKIVAKFPHLALVNDHSKKVGFTPSAQFSKVVHLKPMLSLANGFCVEDISNFITKIQNFLKIDHCPKIVCEYKIDGLSFNARYEYGVLTLASTRGDGQIGENITENLKTIQSFPQTLPITDKVFEVRGEIYITNNDFRVLNIQQQKLGKALFSNPRNAAAGSIRQLDPAITAQRPLKYFVYALGEVTNHHFASTQFELLQKLSQLKFSVNTDYILSDNLHSMIEFYNNVATERNNLAFEIDGVVYKVNDFALQERLGATSTSPRFAIAYKFPALIGRTKITNITLQVGKTGAVTPVALLIPINIAGVTISRATLHNKQEIESKDIRIGDYVFLHRAGDVIPKINGVDLSARDAQSSTRFIFPATCPSCNQNLVVNEGETVARCGNSLACPAQIYERICHFVSKDALNIDGLGRQRIRFLLDNKYIVNIVDIFLLEENNKLLSSNKLEDIAGWGIKSVNKLFKNINQAKNVILDRFIYALAVKHVGKYSAKLLAKEFKTAKNFIDQSLKLANNVTEIYEKLCNIEGLGVKTADQLKQFFMVSANVNLITKLVNILTIQDWQYHGDNLLLSNQTIVFTGTFATVSRSEIKVQAEKLGAKVGTQVSNNTDLLVVGNKAGNKLQKAQQLGIKIINEEEWIKMVNE</sequence>
<dbReference type="EC" id="6.5.1.2" evidence="1"/>
<dbReference type="EMBL" id="AM494475">
    <property type="protein sequence ID" value="CAM80812.1"/>
    <property type="molecule type" value="Genomic_DNA"/>
</dbReference>
<dbReference type="RefSeq" id="WP_011945022.1">
    <property type="nucleotide sequence ID" value="NC_009488.1"/>
</dbReference>
<dbReference type="SMR" id="A5CEY0"/>
<dbReference type="KEGG" id="ots:OTBS_1717"/>
<dbReference type="eggNOG" id="COG0272">
    <property type="taxonomic scope" value="Bacteria"/>
</dbReference>
<dbReference type="HOGENOM" id="CLU_007764_2_1_5"/>
<dbReference type="Proteomes" id="UP000001565">
    <property type="component" value="Chromosome"/>
</dbReference>
<dbReference type="GO" id="GO:0003677">
    <property type="term" value="F:DNA binding"/>
    <property type="evidence" value="ECO:0007669"/>
    <property type="project" value="InterPro"/>
</dbReference>
<dbReference type="GO" id="GO:0003911">
    <property type="term" value="F:DNA ligase (NAD+) activity"/>
    <property type="evidence" value="ECO:0007669"/>
    <property type="project" value="UniProtKB-UniRule"/>
</dbReference>
<dbReference type="GO" id="GO:0046872">
    <property type="term" value="F:metal ion binding"/>
    <property type="evidence" value="ECO:0007669"/>
    <property type="project" value="UniProtKB-KW"/>
</dbReference>
<dbReference type="GO" id="GO:0006281">
    <property type="term" value="P:DNA repair"/>
    <property type="evidence" value="ECO:0007669"/>
    <property type="project" value="UniProtKB-KW"/>
</dbReference>
<dbReference type="GO" id="GO:0006260">
    <property type="term" value="P:DNA replication"/>
    <property type="evidence" value="ECO:0007669"/>
    <property type="project" value="UniProtKB-KW"/>
</dbReference>
<dbReference type="CDD" id="cd17748">
    <property type="entry name" value="BRCT_DNA_ligase_like"/>
    <property type="match status" value="1"/>
</dbReference>
<dbReference type="CDD" id="cd00114">
    <property type="entry name" value="LIGANc"/>
    <property type="match status" value="1"/>
</dbReference>
<dbReference type="FunFam" id="2.40.50.140:FF:000012">
    <property type="entry name" value="DNA ligase"/>
    <property type="match status" value="1"/>
</dbReference>
<dbReference type="Gene3D" id="6.20.10.30">
    <property type="match status" value="1"/>
</dbReference>
<dbReference type="Gene3D" id="1.10.150.20">
    <property type="entry name" value="5' to 3' exonuclease, C-terminal subdomain"/>
    <property type="match status" value="2"/>
</dbReference>
<dbReference type="Gene3D" id="3.40.50.10190">
    <property type="entry name" value="BRCT domain"/>
    <property type="match status" value="1"/>
</dbReference>
<dbReference type="Gene3D" id="3.30.470.30">
    <property type="entry name" value="DNA ligase/mRNA capping enzyme"/>
    <property type="match status" value="1"/>
</dbReference>
<dbReference type="Gene3D" id="1.10.287.610">
    <property type="entry name" value="Helix hairpin bin"/>
    <property type="match status" value="1"/>
</dbReference>
<dbReference type="Gene3D" id="2.40.50.140">
    <property type="entry name" value="Nucleic acid-binding proteins"/>
    <property type="match status" value="1"/>
</dbReference>
<dbReference type="HAMAP" id="MF_01588">
    <property type="entry name" value="DNA_ligase_A"/>
    <property type="match status" value="1"/>
</dbReference>
<dbReference type="InterPro" id="IPR001357">
    <property type="entry name" value="BRCT_dom"/>
</dbReference>
<dbReference type="InterPro" id="IPR036420">
    <property type="entry name" value="BRCT_dom_sf"/>
</dbReference>
<dbReference type="InterPro" id="IPR041663">
    <property type="entry name" value="DisA/LigA_HHH"/>
</dbReference>
<dbReference type="InterPro" id="IPR001679">
    <property type="entry name" value="DNA_ligase"/>
</dbReference>
<dbReference type="InterPro" id="IPR018239">
    <property type="entry name" value="DNA_ligase_AS"/>
</dbReference>
<dbReference type="InterPro" id="IPR033136">
    <property type="entry name" value="DNA_ligase_CS"/>
</dbReference>
<dbReference type="InterPro" id="IPR013839">
    <property type="entry name" value="DNAligase_adenylation"/>
</dbReference>
<dbReference type="InterPro" id="IPR013840">
    <property type="entry name" value="DNAligase_N"/>
</dbReference>
<dbReference type="InterPro" id="IPR003583">
    <property type="entry name" value="Hlx-hairpin-Hlx_DNA-bd_motif"/>
</dbReference>
<dbReference type="InterPro" id="IPR012340">
    <property type="entry name" value="NA-bd_OB-fold"/>
</dbReference>
<dbReference type="InterPro" id="IPR004150">
    <property type="entry name" value="NAD_DNA_ligase_OB"/>
</dbReference>
<dbReference type="InterPro" id="IPR010994">
    <property type="entry name" value="RuvA_2-like"/>
</dbReference>
<dbReference type="InterPro" id="IPR004149">
    <property type="entry name" value="Znf_DNAligase_C4"/>
</dbReference>
<dbReference type="NCBIfam" id="TIGR00575">
    <property type="entry name" value="dnlj"/>
    <property type="match status" value="1"/>
</dbReference>
<dbReference type="NCBIfam" id="NF005932">
    <property type="entry name" value="PRK07956.1"/>
    <property type="match status" value="1"/>
</dbReference>
<dbReference type="Pfam" id="PF00533">
    <property type="entry name" value="BRCT"/>
    <property type="match status" value="1"/>
</dbReference>
<dbReference type="Pfam" id="PF01653">
    <property type="entry name" value="DNA_ligase_aden"/>
    <property type="match status" value="1"/>
</dbReference>
<dbReference type="Pfam" id="PF03120">
    <property type="entry name" value="DNA_ligase_OB"/>
    <property type="match status" value="1"/>
</dbReference>
<dbReference type="Pfam" id="PF03119">
    <property type="entry name" value="DNA_ligase_ZBD"/>
    <property type="match status" value="1"/>
</dbReference>
<dbReference type="Pfam" id="PF12826">
    <property type="entry name" value="HHH_2"/>
    <property type="match status" value="1"/>
</dbReference>
<dbReference type="PIRSF" id="PIRSF001604">
    <property type="entry name" value="LigA"/>
    <property type="match status" value="1"/>
</dbReference>
<dbReference type="SMART" id="SM00292">
    <property type="entry name" value="BRCT"/>
    <property type="match status" value="1"/>
</dbReference>
<dbReference type="SMART" id="SM00278">
    <property type="entry name" value="HhH1"/>
    <property type="match status" value="4"/>
</dbReference>
<dbReference type="SMART" id="SM00532">
    <property type="entry name" value="LIGANc"/>
    <property type="match status" value="1"/>
</dbReference>
<dbReference type="SUPFAM" id="SSF52113">
    <property type="entry name" value="BRCT domain"/>
    <property type="match status" value="1"/>
</dbReference>
<dbReference type="SUPFAM" id="SSF56091">
    <property type="entry name" value="DNA ligase/mRNA capping enzyme, catalytic domain"/>
    <property type="match status" value="1"/>
</dbReference>
<dbReference type="SUPFAM" id="SSF50249">
    <property type="entry name" value="Nucleic acid-binding proteins"/>
    <property type="match status" value="1"/>
</dbReference>
<dbReference type="SUPFAM" id="SSF47781">
    <property type="entry name" value="RuvA domain 2-like"/>
    <property type="match status" value="1"/>
</dbReference>
<dbReference type="PROSITE" id="PS50172">
    <property type="entry name" value="BRCT"/>
    <property type="match status" value="1"/>
</dbReference>
<dbReference type="PROSITE" id="PS01055">
    <property type="entry name" value="DNA_LIGASE_N1"/>
    <property type="match status" value="1"/>
</dbReference>
<dbReference type="PROSITE" id="PS01056">
    <property type="entry name" value="DNA_LIGASE_N2"/>
    <property type="match status" value="1"/>
</dbReference>
<feature type="chain" id="PRO_0000313350" description="DNA ligase">
    <location>
        <begin position="1"/>
        <end position="698"/>
    </location>
</feature>
<feature type="domain" description="BRCT" evidence="1">
    <location>
        <begin position="620"/>
        <end position="698"/>
    </location>
</feature>
<feature type="active site" description="N6-AMP-lysine intermediate" evidence="1">
    <location>
        <position position="130"/>
    </location>
</feature>
<feature type="binding site" evidence="1">
    <location>
        <begin position="47"/>
        <end position="51"/>
    </location>
    <ligand>
        <name>NAD(+)</name>
        <dbReference type="ChEBI" id="CHEBI:57540"/>
    </ligand>
</feature>
<feature type="binding site" evidence="1">
    <location>
        <begin position="96"/>
        <end position="97"/>
    </location>
    <ligand>
        <name>NAD(+)</name>
        <dbReference type="ChEBI" id="CHEBI:57540"/>
    </ligand>
</feature>
<feature type="binding site" evidence="1">
    <location>
        <position position="128"/>
    </location>
    <ligand>
        <name>NAD(+)</name>
        <dbReference type="ChEBI" id="CHEBI:57540"/>
    </ligand>
</feature>
<feature type="binding site" evidence="1">
    <location>
        <position position="151"/>
    </location>
    <ligand>
        <name>NAD(+)</name>
        <dbReference type="ChEBI" id="CHEBI:57540"/>
    </ligand>
</feature>
<feature type="binding site" evidence="1">
    <location>
        <position position="186"/>
    </location>
    <ligand>
        <name>NAD(+)</name>
        <dbReference type="ChEBI" id="CHEBI:57540"/>
    </ligand>
</feature>
<feature type="binding site" evidence="1">
    <location>
        <position position="303"/>
    </location>
    <ligand>
        <name>NAD(+)</name>
        <dbReference type="ChEBI" id="CHEBI:57540"/>
    </ligand>
</feature>
<feature type="binding site" evidence="1">
    <location>
        <position position="327"/>
    </location>
    <ligand>
        <name>NAD(+)</name>
        <dbReference type="ChEBI" id="CHEBI:57540"/>
    </ligand>
</feature>
<feature type="binding site" evidence="1">
    <location>
        <position position="422"/>
    </location>
    <ligand>
        <name>Zn(2+)</name>
        <dbReference type="ChEBI" id="CHEBI:29105"/>
    </ligand>
</feature>
<feature type="binding site" evidence="1">
    <location>
        <position position="425"/>
    </location>
    <ligand>
        <name>Zn(2+)</name>
        <dbReference type="ChEBI" id="CHEBI:29105"/>
    </ligand>
</feature>
<feature type="binding site" evidence="1">
    <location>
        <position position="440"/>
    </location>
    <ligand>
        <name>Zn(2+)</name>
        <dbReference type="ChEBI" id="CHEBI:29105"/>
    </ligand>
</feature>
<feature type="binding site" evidence="1">
    <location>
        <position position="446"/>
    </location>
    <ligand>
        <name>Zn(2+)</name>
        <dbReference type="ChEBI" id="CHEBI:29105"/>
    </ligand>
</feature>
<proteinExistence type="inferred from homology"/>
<comment type="function">
    <text evidence="1">DNA ligase that catalyzes the formation of phosphodiester linkages between 5'-phosphoryl and 3'-hydroxyl groups in double-stranded DNA using NAD as a coenzyme and as the energy source for the reaction. It is essential for DNA replication and repair of damaged DNA.</text>
</comment>
<comment type="catalytic activity">
    <reaction evidence="1">
        <text>NAD(+) + (deoxyribonucleotide)n-3'-hydroxyl + 5'-phospho-(deoxyribonucleotide)m = (deoxyribonucleotide)n+m + AMP + beta-nicotinamide D-nucleotide.</text>
        <dbReference type="EC" id="6.5.1.2"/>
    </reaction>
</comment>
<comment type="cofactor">
    <cofactor evidence="1">
        <name>Mg(2+)</name>
        <dbReference type="ChEBI" id="CHEBI:18420"/>
    </cofactor>
    <cofactor evidence="1">
        <name>Mn(2+)</name>
        <dbReference type="ChEBI" id="CHEBI:29035"/>
    </cofactor>
</comment>
<comment type="similarity">
    <text evidence="1">Belongs to the NAD-dependent DNA ligase family. LigA subfamily.</text>
</comment>
<name>DNLJ_ORITB</name>
<evidence type="ECO:0000255" key="1">
    <source>
        <dbReference type="HAMAP-Rule" id="MF_01588"/>
    </source>
</evidence>
<accession>A5CEY0</accession>